<keyword id="KW-0217">Developmental protein</keyword>
<keyword id="KW-0221">Differentiation</keyword>
<keyword id="KW-0238">DNA-binding</keyword>
<keyword id="KW-0479">Metal-binding</keyword>
<keyword id="KW-0524">Neurogenesis</keyword>
<keyword id="KW-0539">Nucleus</keyword>
<keyword id="KW-1185">Reference proteome</keyword>
<keyword id="KW-0677">Repeat</keyword>
<keyword id="KW-0678">Repressor</keyword>
<keyword id="KW-0804">Transcription</keyword>
<keyword id="KW-0805">Transcription regulation</keyword>
<keyword id="KW-0862">Zinc</keyword>
<keyword id="KW-0863">Zinc-finger</keyword>
<accession>Q9IAJ2</accession>
<evidence type="ECO:0000250" key="1"/>
<evidence type="ECO:0000255" key="2">
    <source>
        <dbReference type="PROSITE-ProRule" id="PRU00042"/>
    </source>
</evidence>
<evidence type="ECO:0000256" key="3">
    <source>
        <dbReference type="SAM" id="MobiDB-lite"/>
    </source>
</evidence>
<evidence type="ECO:0000269" key="4">
    <source>
    </source>
</evidence>
<evidence type="ECO:0000305" key="5"/>
<comment type="function">
    <text evidence="4">Transcription repressor. Involved in the development of the forebrain region.</text>
</comment>
<comment type="subcellular location">
    <subcellularLocation>
        <location evidence="5">Nucleus</location>
    </subcellularLocation>
</comment>
<comment type="developmental stage">
    <text evidence="4">Expressed during mid/late-gastrulation at the rostro-medial regions of the anterior neural plate. Expression becomes more pronounced as neurulation progresses and remains localized within the prospective telencephalic region. By stage 46, expressed in the olfactory bulbs, nervus terminalis, ventral hypothalamic nucleus, and ventricular zone.</text>
</comment>
<comment type="similarity">
    <text evidence="5">Belongs to the krueppel C2H2-type zinc-finger protein family.</text>
</comment>
<organism>
    <name type="scientific">Xenopus laevis</name>
    <name type="common">African clawed frog</name>
    <dbReference type="NCBI Taxonomy" id="8355"/>
    <lineage>
        <taxon>Eukaryota</taxon>
        <taxon>Metazoa</taxon>
        <taxon>Chordata</taxon>
        <taxon>Craniata</taxon>
        <taxon>Vertebrata</taxon>
        <taxon>Euteleostomi</taxon>
        <taxon>Amphibia</taxon>
        <taxon>Batrachia</taxon>
        <taxon>Anura</taxon>
        <taxon>Pipoidea</taxon>
        <taxon>Pipidae</taxon>
        <taxon>Xenopodinae</taxon>
        <taxon>Xenopus</taxon>
        <taxon>Xenopus</taxon>
    </lineage>
</organism>
<feature type="chain" id="PRO_0000295117" description="Fez family zinc finger protein 1">
    <location>
        <begin position="1"/>
        <end position="466"/>
    </location>
</feature>
<feature type="zinc finger region" description="C2H2-type 1" evidence="2">
    <location>
        <begin position="261"/>
        <end position="283"/>
    </location>
</feature>
<feature type="zinc finger region" description="C2H2-type 2" evidence="2">
    <location>
        <begin position="289"/>
        <end position="311"/>
    </location>
</feature>
<feature type="zinc finger region" description="C2H2-type 3" evidence="2">
    <location>
        <begin position="317"/>
        <end position="339"/>
    </location>
</feature>
<feature type="zinc finger region" description="C2H2-type 4" evidence="2">
    <location>
        <begin position="345"/>
        <end position="367"/>
    </location>
</feature>
<feature type="zinc finger region" description="C2H2-type 5" evidence="2">
    <location>
        <begin position="373"/>
        <end position="395"/>
    </location>
</feature>
<feature type="zinc finger region" description="C2H2-type 6" evidence="2">
    <location>
        <begin position="401"/>
        <end position="424"/>
    </location>
</feature>
<feature type="region of interest" description="Disordered" evidence="3">
    <location>
        <begin position="446"/>
        <end position="466"/>
    </location>
</feature>
<feature type="short sequence motif" description="Engrailed homology 1 repressor" evidence="1">
    <location>
        <begin position="34"/>
        <end position="49"/>
    </location>
</feature>
<feature type="compositionally biased region" description="Polar residues" evidence="3">
    <location>
        <begin position="453"/>
        <end position="466"/>
    </location>
</feature>
<protein>
    <recommendedName>
        <fullName>Fez family zinc finger protein 1</fullName>
    </recommendedName>
</protein>
<reference key="1">
    <citation type="journal article" date="2000" name="Mech. Dev.">
        <title>Cloning and expression of a novel zinc finger gene, Fez, transcribed in the forebrain of Xenopus and mouse embryos.</title>
        <authorList>
            <person name="Matsuo-Takasaki M."/>
            <person name="Lim J.H."/>
            <person name="Beanan M.J."/>
            <person name="Sato S.M."/>
            <person name="Sargent T.D."/>
        </authorList>
    </citation>
    <scope>NUCLEOTIDE SEQUENCE [MRNA]</scope>
    <scope>FUNCTION</scope>
    <scope>DEVELOPMENTAL STAGE</scope>
    <source>
        <tissue>Forebrain</tissue>
    </source>
</reference>
<name>FEZF1_XENLA</name>
<sequence length="466" mass="52010">MDSSLQHSTTKILSTQESREALSNRLTMISGAKPLAFSIERIMSRTPEPKCLPVASLLQSSAPKGDQKPGLHINSSSIPRMIPFVPVAYEHCAKIGISGAELRKSHVDSSPPFSCSDLLNCALTLKGDFPREALPLQQYKLVRPRVVNHSSFHAMGAAFCYFNRGDSEWHPPASINIHPMASYFLGSPLHQAPKCYVAAERNKLLAPSVEKFPSGVTFKDLSQAQFQHYMKEGPRSLSDKITFKTSAKFSSASPSSKPKVFTCEVCGKVFNAHYNLTRHMPVHTGARPFVCKICGKGFRQASTLCRHKIIHTQEKPHKCNQCGKAFNRSSTLNTHTRIHAGYKPFVCEFCGKGFHQKGNYKNHKLTHSGEKQFKCNICNKAFHQIYNLTFHMHTHNDKKPFTCPTCGKGFCRNFDLKKHVRKLHDNSGSSAGTRGLGATGHQELHLPNREQSHTIIQSPQLQKSVY</sequence>
<gene>
    <name type="primary">fezf1</name>
    <name type="synonym">fez</name>
</gene>
<proteinExistence type="evidence at transcript level"/>
<dbReference type="EMBL" id="AF195021">
    <property type="protein sequence ID" value="AAF26844.1"/>
    <property type="molecule type" value="mRNA"/>
</dbReference>
<dbReference type="RefSeq" id="NP_001082002.1">
    <property type="nucleotide sequence ID" value="NM_001088533.1"/>
</dbReference>
<dbReference type="SMR" id="Q9IAJ2"/>
<dbReference type="GeneID" id="398172"/>
<dbReference type="KEGG" id="xla:398172"/>
<dbReference type="AGR" id="Xenbase:XB-GENE-985994"/>
<dbReference type="CTD" id="398172"/>
<dbReference type="Xenbase" id="XB-GENE-985994">
    <property type="gene designation" value="fezf1.S"/>
</dbReference>
<dbReference type="OrthoDB" id="5062908at2759"/>
<dbReference type="Proteomes" id="UP000186698">
    <property type="component" value="Chromosome 3S"/>
</dbReference>
<dbReference type="Bgee" id="398172">
    <property type="expression patterns" value="Expressed in neurula embryo and 3 other cell types or tissues"/>
</dbReference>
<dbReference type="GO" id="GO:0005634">
    <property type="term" value="C:nucleus"/>
    <property type="evidence" value="ECO:0007669"/>
    <property type="project" value="UniProtKB-SubCell"/>
</dbReference>
<dbReference type="GO" id="GO:0000981">
    <property type="term" value="F:DNA-binding transcription factor activity, RNA polymerase II-specific"/>
    <property type="evidence" value="ECO:0000318"/>
    <property type="project" value="GO_Central"/>
</dbReference>
<dbReference type="GO" id="GO:0000978">
    <property type="term" value="F:RNA polymerase II cis-regulatory region sequence-specific DNA binding"/>
    <property type="evidence" value="ECO:0000318"/>
    <property type="project" value="GO_Central"/>
</dbReference>
<dbReference type="GO" id="GO:0008270">
    <property type="term" value="F:zinc ion binding"/>
    <property type="evidence" value="ECO:0007669"/>
    <property type="project" value="UniProtKB-KW"/>
</dbReference>
<dbReference type="GO" id="GO:0030154">
    <property type="term" value="P:cell differentiation"/>
    <property type="evidence" value="ECO:0007669"/>
    <property type="project" value="UniProtKB-KW"/>
</dbReference>
<dbReference type="GO" id="GO:0007399">
    <property type="term" value="P:nervous system development"/>
    <property type="evidence" value="ECO:0007669"/>
    <property type="project" value="UniProtKB-KW"/>
</dbReference>
<dbReference type="GO" id="GO:0006357">
    <property type="term" value="P:regulation of transcription by RNA polymerase II"/>
    <property type="evidence" value="ECO:0000318"/>
    <property type="project" value="GO_Central"/>
</dbReference>
<dbReference type="FunFam" id="3.30.160.60:FF:000103">
    <property type="entry name" value="FEZ family zinc finger 1"/>
    <property type="match status" value="1"/>
</dbReference>
<dbReference type="FunFam" id="3.30.160.60:FF:000251">
    <property type="entry name" value="FEZ family zinc finger 2"/>
    <property type="match status" value="1"/>
</dbReference>
<dbReference type="FunFam" id="3.30.160.60:FF:000227">
    <property type="entry name" value="fez family zinc finger protein 1"/>
    <property type="match status" value="1"/>
</dbReference>
<dbReference type="FunFam" id="3.30.160.60:FF:000164">
    <property type="entry name" value="Fez family zinc finger protein 2"/>
    <property type="match status" value="1"/>
</dbReference>
<dbReference type="FunFam" id="3.30.160.60:FF:000194">
    <property type="entry name" value="Fez family zinc finger protein 2"/>
    <property type="match status" value="1"/>
</dbReference>
<dbReference type="FunFam" id="3.30.160.60:FF:000863">
    <property type="entry name" value="fez family zinc finger protein 2"/>
    <property type="match status" value="1"/>
</dbReference>
<dbReference type="Gene3D" id="3.30.160.60">
    <property type="entry name" value="Classic Zinc Finger"/>
    <property type="match status" value="6"/>
</dbReference>
<dbReference type="InterPro" id="IPR050331">
    <property type="entry name" value="Zinc_finger"/>
</dbReference>
<dbReference type="InterPro" id="IPR036236">
    <property type="entry name" value="Znf_C2H2_sf"/>
</dbReference>
<dbReference type="InterPro" id="IPR013087">
    <property type="entry name" value="Znf_C2H2_type"/>
</dbReference>
<dbReference type="PANTHER" id="PTHR16515:SF35">
    <property type="entry name" value="FEZ FAMILY ZINC FINGER PROTEIN 2"/>
    <property type="match status" value="1"/>
</dbReference>
<dbReference type="PANTHER" id="PTHR16515">
    <property type="entry name" value="PR DOMAIN ZINC FINGER PROTEIN"/>
    <property type="match status" value="1"/>
</dbReference>
<dbReference type="Pfam" id="PF00096">
    <property type="entry name" value="zf-C2H2"/>
    <property type="match status" value="5"/>
</dbReference>
<dbReference type="Pfam" id="PF13912">
    <property type="entry name" value="zf-C2H2_6"/>
    <property type="match status" value="1"/>
</dbReference>
<dbReference type="SMART" id="SM00355">
    <property type="entry name" value="ZnF_C2H2"/>
    <property type="match status" value="6"/>
</dbReference>
<dbReference type="SUPFAM" id="SSF57667">
    <property type="entry name" value="beta-beta-alpha zinc fingers"/>
    <property type="match status" value="3"/>
</dbReference>
<dbReference type="PROSITE" id="PS00028">
    <property type="entry name" value="ZINC_FINGER_C2H2_1"/>
    <property type="match status" value="6"/>
</dbReference>
<dbReference type="PROSITE" id="PS50157">
    <property type="entry name" value="ZINC_FINGER_C2H2_2"/>
    <property type="match status" value="6"/>
</dbReference>